<reference key="1">
    <citation type="journal article" date="2003" name="J. Bacteriol.">
        <title>Complete genome sequence of the ammonia-oxidizing bacterium and obligate chemolithoautotroph Nitrosomonas europaea.</title>
        <authorList>
            <person name="Chain P."/>
            <person name="Lamerdin J.E."/>
            <person name="Larimer F.W."/>
            <person name="Regala W."/>
            <person name="Lao V."/>
            <person name="Land M.L."/>
            <person name="Hauser L."/>
            <person name="Hooper A.B."/>
            <person name="Klotz M.G."/>
            <person name="Norton J."/>
            <person name="Sayavedra-Soto L.A."/>
            <person name="Arciero D.M."/>
            <person name="Hommes N.G."/>
            <person name="Whittaker M.M."/>
            <person name="Arp D.J."/>
        </authorList>
    </citation>
    <scope>NUCLEOTIDE SEQUENCE [LARGE SCALE GENOMIC DNA]</scope>
    <source>
        <strain>ATCC 19718 / CIP 103999 / KCTC 2705 / NBRC 14298</strain>
    </source>
</reference>
<protein>
    <recommendedName>
        <fullName evidence="1">Small ribosomal subunit protein uS14</fullName>
    </recommendedName>
    <alternativeName>
        <fullName evidence="2">30S ribosomal protein S14</fullName>
    </alternativeName>
</protein>
<evidence type="ECO:0000255" key="1">
    <source>
        <dbReference type="HAMAP-Rule" id="MF_00537"/>
    </source>
</evidence>
<evidence type="ECO:0000305" key="2"/>
<proteinExistence type="inferred from homology"/>
<accession>Q82X78</accession>
<comment type="function">
    <text evidence="1">Binds 16S rRNA, required for the assembly of 30S particles and may also be responsible for determining the conformation of the 16S rRNA at the A site.</text>
</comment>
<comment type="subunit">
    <text evidence="1">Part of the 30S ribosomal subunit. Contacts proteins S3 and S10.</text>
</comment>
<comment type="similarity">
    <text evidence="1">Belongs to the universal ribosomal protein uS14 family.</text>
</comment>
<sequence>MAKKSIVNRNLKRLKTVNKYAARRAEIVSILRDAGSDIEAKASARDLLQKLPRNASPVRLRQRCALTGRPRGVFSKFGLGRIKLREIAMRGEIPGLIKASW</sequence>
<gene>
    <name evidence="1" type="primary">rpsN</name>
    <name type="ordered locus">NE0414</name>
</gene>
<organism>
    <name type="scientific">Nitrosomonas europaea (strain ATCC 19718 / CIP 103999 / KCTC 2705 / NBRC 14298)</name>
    <dbReference type="NCBI Taxonomy" id="228410"/>
    <lineage>
        <taxon>Bacteria</taxon>
        <taxon>Pseudomonadati</taxon>
        <taxon>Pseudomonadota</taxon>
        <taxon>Betaproteobacteria</taxon>
        <taxon>Nitrosomonadales</taxon>
        <taxon>Nitrosomonadaceae</taxon>
        <taxon>Nitrosomonas</taxon>
    </lineage>
</organism>
<feature type="chain" id="PRO_1000128465" description="Small ribosomal subunit protein uS14">
    <location>
        <begin position="1"/>
        <end position="101"/>
    </location>
</feature>
<keyword id="KW-1185">Reference proteome</keyword>
<keyword id="KW-0687">Ribonucleoprotein</keyword>
<keyword id="KW-0689">Ribosomal protein</keyword>
<keyword id="KW-0694">RNA-binding</keyword>
<keyword id="KW-0699">rRNA-binding</keyword>
<name>RS14_NITEU</name>
<dbReference type="EMBL" id="AL954747">
    <property type="protein sequence ID" value="CAD84325.1"/>
    <property type="molecule type" value="Genomic_DNA"/>
</dbReference>
<dbReference type="RefSeq" id="WP_011111049.1">
    <property type="nucleotide sequence ID" value="NC_004757.1"/>
</dbReference>
<dbReference type="SMR" id="Q82X78"/>
<dbReference type="STRING" id="228410.NE0414"/>
<dbReference type="GeneID" id="87105709"/>
<dbReference type="KEGG" id="neu:NE0414"/>
<dbReference type="eggNOG" id="COG0199">
    <property type="taxonomic scope" value="Bacteria"/>
</dbReference>
<dbReference type="HOGENOM" id="CLU_139869_0_1_4"/>
<dbReference type="OrthoDB" id="9810484at2"/>
<dbReference type="PhylomeDB" id="Q82X78"/>
<dbReference type="Proteomes" id="UP000001416">
    <property type="component" value="Chromosome"/>
</dbReference>
<dbReference type="GO" id="GO:0005737">
    <property type="term" value="C:cytoplasm"/>
    <property type="evidence" value="ECO:0007669"/>
    <property type="project" value="UniProtKB-ARBA"/>
</dbReference>
<dbReference type="GO" id="GO:0015935">
    <property type="term" value="C:small ribosomal subunit"/>
    <property type="evidence" value="ECO:0007669"/>
    <property type="project" value="TreeGrafter"/>
</dbReference>
<dbReference type="GO" id="GO:0019843">
    <property type="term" value="F:rRNA binding"/>
    <property type="evidence" value="ECO:0007669"/>
    <property type="project" value="UniProtKB-UniRule"/>
</dbReference>
<dbReference type="GO" id="GO:0003735">
    <property type="term" value="F:structural constituent of ribosome"/>
    <property type="evidence" value="ECO:0007669"/>
    <property type="project" value="InterPro"/>
</dbReference>
<dbReference type="GO" id="GO:0006412">
    <property type="term" value="P:translation"/>
    <property type="evidence" value="ECO:0007669"/>
    <property type="project" value="UniProtKB-UniRule"/>
</dbReference>
<dbReference type="FunFam" id="1.10.287.1480:FF:000001">
    <property type="entry name" value="30S ribosomal protein S14"/>
    <property type="match status" value="1"/>
</dbReference>
<dbReference type="Gene3D" id="1.10.287.1480">
    <property type="match status" value="1"/>
</dbReference>
<dbReference type="HAMAP" id="MF_00537">
    <property type="entry name" value="Ribosomal_uS14_1"/>
    <property type="match status" value="1"/>
</dbReference>
<dbReference type="InterPro" id="IPR001209">
    <property type="entry name" value="Ribosomal_uS14"/>
</dbReference>
<dbReference type="InterPro" id="IPR023036">
    <property type="entry name" value="Ribosomal_uS14_bac/plastid"/>
</dbReference>
<dbReference type="NCBIfam" id="NF006477">
    <property type="entry name" value="PRK08881.1"/>
    <property type="match status" value="1"/>
</dbReference>
<dbReference type="PANTHER" id="PTHR19836">
    <property type="entry name" value="30S RIBOSOMAL PROTEIN S14"/>
    <property type="match status" value="1"/>
</dbReference>
<dbReference type="PANTHER" id="PTHR19836:SF19">
    <property type="entry name" value="SMALL RIBOSOMAL SUBUNIT PROTEIN US14M"/>
    <property type="match status" value="1"/>
</dbReference>
<dbReference type="Pfam" id="PF00253">
    <property type="entry name" value="Ribosomal_S14"/>
    <property type="match status" value="1"/>
</dbReference>
<dbReference type="SUPFAM" id="SSF57716">
    <property type="entry name" value="Glucocorticoid receptor-like (DNA-binding domain)"/>
    <property type="match status" value="1"/>
</dbReference>